<organism>
    <name type="scientific">Leptospira borgpetersenii serovar Hardjo-bovis (strain L550)</name>
    <dbReference type="NCBI Taxonomy" id="355276"/>
    <lineage>
        <taxon>Bacteria</taxon>
        <taxon>Pseudomonadati</taxon>
        <taxon>Spirochaetota</taxon>
        <taxon>Spirochaetia</taxon>
        <taxon>Leptospirales</taxon>
        <taxon>Leptospiraceae</taxon>
        <taxon>Leptospira</taxon>
    </lineage>
</organism>
<comment type="similarity">
    <text evidence="1">Belongs to the bacterial ribosomal protein bL27 family.</text>
</comment>
<keyword id="KW-0687">Ribonucleoprotein</keyword>
<keyword id="KW-0689">Ribosomal protein</keyword>
<dbReference type="EMBL" id="CP000348">
    <property type="protein sequence ID" value="ABJ78200.1"/>
    <property type="molecule type" value="Genomic_DNA"/>
</dbReference>
<dbReference type="RefSeq" id="WP_000940600.1">
    <property type="nucleotide sequence ID" value="NC_008508.1"/>
</dbReference>
<dbReference type="SMR" id="Q054P5"/>
<dbReference type="GeneID" id="61173119"/>
<dbReference type="KEGG" id="lbl:LBL_0622"/>
<dbReference type="HOGENOM" id="CLU_095424_4_1_12"/>
<dbReference type="GO" id="GO:0022625">
    <property type="term" value="C:cytosolic large ribosomal subunit"/>
    <property type="evidence" value="ECO:0007669"/>
    <property type="project" value="TreeGrafter"/>
</dbReference>
<dbReference type="GO" id="GO:0003735">
    <property type="term" value="F:structural constituent of ribosome"/>
    <property type="evidence" value="ECO:0007669"/>
    <property type="project" value="InterPro"/>
</dbReference>
<dbReference type="GO" id="GO:0006412">
    <property type="term" value="P:translation"/>
    <property type="evidence" value="ECO:0007669"/>
    <property type="project" value="UniProtKB-UniRule"/>
</dbReference>
<dbReference type="FunFam" id="2.40.50.100:FF:000001">
    <property type="entry name" value="50S ribosomal protein L27"/>
    <property type="match status" value="1"/>
</dbReference>
<dbReference type="Gene3D" id="2.40.50.100">
    <property type="match status" value="1"/>
</dbReference>
<dbReference type="HAMAP" id="MF_00539">
    <property type="entry name" value="Ribosomal_bL27"/>
    <property type="match status" value="1"/>
</dbReference>
<dbReference type="InterPro" id="IPR001684">
    <property type="entry name" value="Ribosomal_bL27"/>
</dbReference>
<dbReference type="InterPro" id="IPR018261">
    <property type="entry name" value="Ribosomal_bL27_CS"/>
</dbReference>
<dbReference type="NCBIfam" id="TIGR00062">
    <property type="entry name" value="L27"/>
    <property type="match status" value="1"/>
</dbReference>
<dbReference type="PANTHER" id="PTHR15893:SF0">
    <property type="entry name" value="LARGE RIBOSOMAL SUBUNIT PROTEIN BL27M"/>
    <property type="match status" value="1"/>
</dbReference>
<dbReference type="PANTHER" id="PTHR15893">
    <property type="entry name" value="RIBOSOMAL PROTEIN L27"/>
    <property type="match status" value="1"/>
</dbReference>
<dbReference type="Pfam" id="PF01016">
    <property type="entry name" value="Ribosomal_L27"/>
    <property type="match status" value="1"/>
</dbReference>
<dbReference type="PRINTS" id="PR00063">
    <property type="entry name" value="RIBOSOMALL27"/>
</dbReference>
<dbReference type="SUPFAM" id="SSF110324">
    <property type="entry name" value="Ribosomal L27 protein-like"/>
    <property type="match status" value="1"/>
</dbReference>
<dbReference type="PROSITE" id="PS00831">
    <property type="entry name" value="RIBOSOMAL_L27"/>
    <property type="match status" value="1"/>
</dbReference>
<accession>Q054P5</accession>
<reference key="1">
    <citation type="journal article" date="2006" name="Proc. Natl. Acad. Sci. U.S.A.">
        <title>Genome reduction in Leptospira borgpetersenii reflects limited transmission potential.</title>
        <authorList>
            <person name="Bulach D.M."/>
            <person name="Zuerner R.L."/>
            <person name="Wilson P."/>
            <person name="Seemann T."/>
            <person name="McGrath A."/>
            <person name="Cullen P.A."/>
            <person name="Davis J."/>
            <person name="Johnson M."/>
            <person name="Kuczek E."/>
            <person name="Alt D.P."/>
            <person name="Peterson-Burch B."/>
            <person name="Coppel R.L."/>
            <person name="Rood J.I."/>
            <person name="Davies J.K."/>
            <person name="Adler B."/>
        </authorList>
    </citation>
    <scope>NUCLEOTIDE SEQUENCE [LARGE SCALE GENOMIC DNA]</scope>
    <source>
        <strain>L550</strain>
    </source>
</reference>
<sequence length="84" mass="9103">MAHKKGGGSSKNGRDSNSQRLGVKRFGGESVLAGNILVRQRGTKFRPGNNVGLGKDHTLFALVTGKVKFEMVTKLKMQVSVYPE</sequence>
<protein>
    <recommendedName>
        <fullName evidence="1">Large ribosomal subunit protein bL27</fullName>
    </recommendedName>
    <alternativeName>
        <fullName evidence="3">50S ribosomal protein L27</fullName>
    </alternativeName>
</protein>
<gene>
    <name evidence="1" type="primary">rpmA</name>
    <name type="ordered locus">LBL_0622</name>
</gene>
<feature type="chain" id="PRO_1000017507" description="Large ribosomal subunit protein bL27">
    <location>
        <begin position="1"/>
        <end position="84"/>
    </location>
</feature>
<feature type="region of interest" description="Disordered" evidence="2">
    <location>
        <begin position="1"/>
        <end position="24"/>
    </location>
</feature>
<proteinExistence type="inferred from homology"/>
<evidence type="ECO:0000255" key="1">
    <source>
        <dbReference type="HAMAP-Rule" id="MF_00539"/>
    </source>
</evidence>
<evidence type="ECO:0000256" key="2">
    <source>
        <dbReference type="SAM" id="MobiDB-lite"/>
    </source>
</evidence>
<evidence type="ECO:0000305" key="3"/>
<name>RL27_LEPBL</name>